<comment type="function">
    <text evidence="1">Probable chloride channel.</text>
</comment>
<comment type="subcellular location">
    <subcellularLocation>
        <location evidence="2">Cytoplasm</location>
    </subcellularLocation>
    <subcellularLocation>
        <location evidence="2">Membrane</location>
    </subcellularLocation>
    <subcellularLocation>
        <location evidence="2">Lysosome membrane</location>
    </subcellularLocation>
    <subcellularLocation>
        <location evidence="2">Golgi apparatus membrane</location>
    </subcellularLocation>
    <text evidence="1">Can be translocated to membranes, possibly as integral membrane proteins, with chloride channel activity (By similarity). Localizes to lysosomal membranes in the intestine, and to Golgi apparatus in neurons and muscle. It also localizes to dense bodies, a transmembrane structure which links the muscle cytoskeleton to the neighboring hypodermis.</text>
</comment>
<comment type="tissue specificity">
    <text evidence="2">Expressed in the intestine, neurons and muscles.</text>
</comment>
<comment type="domain">
    <text evidence="1">Members of this family may change from a globular, soluble state to a state where the N-terminal domain is inserted into the membrane and functions as a chloride channel. A conformation change of the N-terminal domain is thought to expose hydrophobic surfaces that trigger membrane insertion (By similarity).</text>
</comment>
<comment type="similarity">
    <text evidence="3">Belongs to the chloride channel CLIC family.</text>
</comment>
<proteinExistence type="evidence at transcript level"/>
<organism>
    <name type="scientific">Caenorhabditis elegans</name>
    <dbReference type="NCBI Taxonomy" id="6239"/>
    <lineage>
        <taxon>Eukaryota</taxon>
        <taxon>Metazoa</taxon>
        <taxon>Ecdysozoa</taxon>
        <taxon>Nematoda</taxon>
        <taxon>Chromadorea</taxon>
        <taxon>Rhabditida</taxon>
        <taxon>Rhabditina</taxon>
        <taxon>Rhabditomorpha</taxon>
        <taxon>Rhabditoidea</taxon>
        <taxon>Rhabditidae</taxon>
        <taxon>Peloderinae</taxon>
        <taxon>Caenorhabditis</taxon>
    </lineage>
</organism>
<evidence type="ECO:0000250" key="1"/>
<evidence type="ECO:0000269" key="2">
    <source>
    </source>
</evidence>
<evidence type="ECO:0000305" key="3"/>
<sequence>MPTFSLWLPAGSNNVHPCGDPYAHHLFMRCLYHAKHDPTMKFDVKTTNVNKTSQEFKNTGLRRMPGISAEESGETQTFETEDDILDFLEYLKPERGDDEEAENATCDLFRQFARFVKDVEHRDTAFNTELLRLDKYLSEQETKFLISDDVTHIDCLVLTRLHSIRVAAKMLKNYEIPADLSHVLDYLKAGYATEMFRVSCPSDQEIVLHWTELKDTPRLSAKDRAKLVREEPVFSFSV</sequence>
<feature type="chain" id="PRO_0000144222" description="Chloride intracellular channel exl-1">
    <location>
        <begin position="1"/>
        <end position="238"/>
    </location>
</feature>
<keyword id="KW-0868">Chloride</keyword>
<keyword id="KW-0869">Chloride channel</keyword>
<keyword id="KW-0963">Cytoplasm</keyword>
<keyword id="KW-0333">Golgi apparatus</keyword>
<keyword id="KW-0407">Ion channel</keyword>
<keyword id="KW-0406">Ion transport</keyword>
<keyword id="KW-0458">Lysosome</keyword>
<keyword id="KW-0472">Membrane</keyword>
<keyword id="KW-1185">Reference proteome</keyword>
<keyword id="KW-0813">Transport</keyword>
<keyword id="KW-0851">Voltage-gated channel</keyword>
<gene>
    <name type="primary">exl-1</name>
    <name type="ORF">F26H11.5</name>
</gene>
<accession>O45405</accession>
<dbReference type="EMBL" id="Z81515">
    <property type="protein sequence ID" value="CAB04193.2"/>
    <property type="molecule type" value="Genomic_DNA"/>
</dbReference>
<dbReference type="PIR" id="T21429">
    <property type="entry name" value="T21429"/>
</dbReference>
<dbReference type="RefSeq" id="NP_497000.1">
    <property type="nucleotide sequence ID" value="NM_064599.5"/>
</dbReference>
<dbReference type="SMR" id="O45405"/>
<dbReference type="BioGRID" id="40381">
    <property type="interactions" value="3"/>
</dbReference>
<dbReference type="FunCoup" id="O45405">
    <property type="interactions" value="156"/>
</dbReference>
<dbReference type="IntAct" id="O45405">
    <property type="interactions" value="1"/>
</dbReference>
<dbReference type="STRING" id="6239.F26H11.5.2"/>
<dbReference type="PaxDb" id="6239-F26H11.5"/>
<dbReference type="PeptideAtlas" id="O45405"/>
<dbReference type="EnsemblMetazoa" id="F26H11.5.1">
    <property type="protein sequence ID" value="F26H11.5.1"/>
    <property type="gene ID" value="WBGene00001371"/>
</dbReference>
<dbReference type="GeneID" id="175100"/>
<dbReference type="KEGG" id="cel:CELE_F26H11.5"/>
<dbReference type="UCSC" id="F26H11.5">
    <property type="organism name" value="c. elegans"/>
</dbReference>
<dbReference type="AGR" id="WB:WBGene00001371"/>
<dbReference type="CTD" id="175100"/>
<dbReference type="WormBase" id="F26H11.5">
    <property type="protein sequence ID" value="CE24922"/>
    <property type="gene ID" value="WBGene00001371"/>
    <property type="gene designation" value="exl-1"/>
</dbReference>
<dbReference type="eggNOG" id="KOG1422">
    <property type="taxonomic scope" value="Eukaryota"/>
</dbReference>
<dbReference type="GeneTree" id="ENSGT00940000172914"/>
<dbReference type="HOGENOM" id="CLU_061051_0_1_1"/>
<dbReference type="InParanoid" id="O45405"/>
<dbReference type="OMA" id="RCENSIE"/>
<dbReference type="OrthoDB" id="1935530at2759"/>
<dbReference type="PhylomeDB" id="O45405"/>
<dbReference type="PRO" id="PR:O45405"/>
<dbReference type="Proteomes" id="UP000001940">
    <property type="component" value="Chromosome II"/>
</dbReference>
<dbReference type="Bgee" id="WBGene00001371">
    <property type="expression patterns" value="Expressed in adult organism and 4 other cell types or tissues"/>
</dbReference>
<dbReference type="GO" id="GO:0016324">
    <property type="term" value="C:apical plasma membrane"/>
    <property type="evidence" value="ECO:0000314"/>
    <property type="project" value="WormBase"/>
</dbReference>
<dbReference type="GO" id="GO:0034707">
    <property type="term" value="C:chloride channel complex"/>
    <property type="evidence" value="ECO:0007669"/>
    <property type="project" value="UniProtKB-KW"/>
</dbReference>
<dbReference type="GO" id="GO:0005737">
    <property type="term" value="C:cytoplasm"/>
    <property type="evidence" value="ECO:0000318"/>
    <property type="project" value="GO_Central"/>
</dbReference>
<dbReference type="GO" id="GO:0005783">
    <property type="term" value="C:endoplasmic reticulum"/>
    <property type="evidence" value="ECO:0000314"/>
    <property type="project" value="WormBase"/>
</dbReference>
<dbReference type="GO" id="GO:0005794">
    <property type="term" value="C:Golgi apparatus"/>
    <property type="evidence" value="ECO:0000314"/>
    <property type="project" value="WormBase"/>
</dbReference>
<dbReference type="GO" id="GO:0000139">
    <property type="term" value="C:Golgi membrane"/>
    <property type="evidence" value="ECO:0000314"/>
    <property type="project" value="WormBase"/>
</dbReference>
<dbReference type="GO" id="GO:0005765">
    <property type="term" value="C:lysosomal membrane"/>
    <property type="evidence" value="ECO:0000314"/>
    <property type="project" value="WormBase"/>
</dbReference>
<dbReference type="GO" id="GO:0005764">
    <property type="term" value="C:lysosome"/>
    <property type="evidence" value="ECO:0000314"/>
    <property type="project" value="WormBase"/>
</dbReference>
<dbReference type="GO" id="GO:0036195">
    <property type="term" value="C:muscle cell projection membrane"/>
    <property type="evidence" value="ECO:0000314"/>
    <property type="project" value="WormBase"/>
</dbReference>
<dbReference type="GO" id="GO:0055120">
    <property type="term" value="C:striated muscle dense body"/>
    <property type="evidence" value="ECO:0000314"/>
    <property type="project" value="WormBase"/>
</dbReference>
<dbReference type="GO" id="GO:0005254">
    <property type="term" value="F:chloride channel activity"/>
    <property type="evidence" value="ECO:0000318"/>
    <property type="project" value="GO_Central"/>
</dbReference>
<dbReference type="GO" id="GO:0006821">
    <property type="term" value="P:chloride transport"/>
    <property type="evidence" value="ECO:0000318"/>
    <property type="project" value="GO_Central"/>
</dbReference>
<dbReference type="FunFam" id="1.20.1050.10:FF:000091">
    <property type="entry name" value="Chloride intracellular channel exl-1"/>
    <property type="match status" value="1"/>
</dbReference>
<dbReference type="FunFam" id="3.40.30.10:FF:000684">
    <property type="entry name" value="Chloride intracellular channel exl-1"/>
    <property type="match status" value="1"/>
</dbReference>
<dbReference type="Gene3D" id="1.20.1050.10">
    <property type="match status" value="1"/>
</dbReference>
<dbReference type="Gene3D" id="3.40.30.10">
    <property type="entry name" value="Glutaredoxin"/>
    <property type="match status" value="1"/>
</dbReference>
<dbReference type="InterPro" id="IPR036282">
    <property type="entry name" value="Glutathione-S-Trfase_C_sf"/>
</dbReference>
<dbReference type="PANTHER" id="PTHR43920:SF10">
    <property type="entry name" value="CHLORIDE INTRACELLULAR CHANNEL EXL-1"/>
    <property type="match status" value="1"/>
</dbReference>
<dbReference type="PANTHER" id="PTHR43920">
    <property type="entry name" value="CHLORIDE INTRACELLULAR CHANNEL, ISOFORM A"/>
    <property type="match status" value="1"/>
</dbReference>
<dbReference type="SUPFAM" id="SSF47616">
    <property type="entry name" value="GST C-terminal domain-like"/>
    <property type="match status" value="1"/>
</dbReference>
<name>EXL1_CAEEL</name>
<reference key="1">
    <citation type="journal article" date="1998" name="Science">
        <title>Genome sequence of the nematode C. elegans: a platform for investigating biology.</title>
        <authorList>
            <consortium name="The C. elegans sequencing consortium"/>
        </authorList>
    </citation>
    <scope>NUCLEOTIDE SEQUENCE [LARGE SCALE GENOMIC DNA]</scope>
    <source>
        <strain>Bristol N2</strain>
    </source>
</reference>
<reference key="2">
    <citation type="journal article" date="2003" name="Science">
        <title>A C. elegans CLIC-like protein required for intracellular tube formation and maintenance.</title>
        <authorList>
            <person name="Berry K.L."/>
            <person name="Buelow H.E."/>
            <person name="Hall D.H."/>
            <person name="Hobert O."/>
        </authorList>
    </citation>
    <scope>SUBCELLULAR LOCATION</scope>
    <scope>TISSUE SPECIFICITY</scope>
</reference>
<protein>
    <recommendedName>
        <fullName>Chloride intracellular channel exl-1</fullName>
    </recommendedName>
    <alternativeName>
        <fullName>Exc-4-like protein</fullName>
    </alternativeName>
</protein>